<comment type="function">
    <text evidence="1">Associates with the EF-Tu.GDP complex and induces the exchange of GDP to GTP. It remains bound to the aminoacyl-tRNA.EF-Tu.GTP complex up to the GTP hydrolysis stage on the ribosome.</text>
</comment>
<comment type="subcellular location">
    <subcellularLocation>
        <location evidence="1">Cytoplasm</location>
    </subcellularLocation>
</comment>
<comment type="similarity">
    <text evidence="1">Belongs to the EF-Ts family.</text>
</comment>
<reference key="1">
    <citation type="journal article" date="2006" name="Proc. Natl. Acad. Sci. U.S.A.">
        <title>Comparative genomics of the lactic acid bacteria.</title>
        <authorList>
            <person name="Makarova K.S."/>
            <person name="Slesarev A."/>
            <person name="Wolf Y.I."/>
            <person name="Sorokin A."/>
            <person name="Mirkin B."/>
            <person name="Koonin E.V."/>
            <person name="Pavlov A."/>
            <person name="Pavlova N."/>
            <person name="Karamychev V."/>
            <person name="Polouchine N."/>
            <person name="Shakhova V."/>
            <person name="Grigoriev I."/>
            <person name="Lou Y."/>
            <person name="Rohksar D."/>
            <person name="Lucas S."/>
            <person name="Huang K."/>
            <person name="Goodstein D.M."/>
            <person name="Hawkins T."/>
            <person name="Plengvidhya V."/>
            <person name="Welker D."/>
            <person name="Hughes J."/>
            <person name="Goh Y."/>
            <person name="Benson A."/>
            <person name="Baldwin K."/>
            <person name="Lee J.-H."/>
            <person name="Diaz-Muniz I."/>
            <person name="Dosti B."/>
            <person name="Smeianov V."/>
            <person name="Wechter W."/>
            <person name="Barabote R."/>
            <person name="Lorca G."/>
            <person name="Altermann E."/>
            <person name="Barrangou R."/>
            <person name="Ganesan B."/>
            <person name="Xie Y."/>
            <person name="Rawsthorne H."/>
            <person name="Tamir D."/>
            <person name="Parker C."/>
            <person name="Breidt F."/>
            <person name="Broadbent J.R."/>
            <person name="Hutkins R."/>
            <person name="O'Sullivan D."/>
            <person name="Steele J."/>
            <person name="Unlu G."/>
            <person name="Saier M.H. Jr."/>
            <person name="Klaenhammer T."/>
            <person name="Richardson P."/>
            <person name="Kozyavkin S."/>
            <person name="Weimer B.C."/>
            <person name="Mills D.A."/>
        </authorList>
    </citation>
    <scope>NUCLEOTIDE SEQUENCE [LARGE SCALE GENOMIC DNA]</scope>
    <source>
        <strain>ATCC 334 / BCRC 17002 / CCUG 31169 / CIP 107868 / KCTC 3260 / NRRL B-441</strain>
    </source>
</reference>
<proteinExistence type="inferred from homology"/>
<gene>
    <name evidence="1" type="primary">tsf</name>
    <name type="ordered locus">LSEI_1585</name>
</gene>
<dbReference type="EMBL" id="CP000423">
    <property type="protein sequence ID" value="ABJ70359.1"/>
    <property type="molecule type" value="Genomic_DNA"/>
</dbReference>
<dbReference type="RefSeq" id="WP_003565808.1">
    <property type="nucleotide sequence ID" value="NC_008526.1"/>
</dbReference>
<dbReference type="RefSeq" id="YP_806801.1">
    <property type="nucleotide sequence ID" value="NC_008526.1"/>
</dbReference>
<dbReference type="SMR" id="Q038L3"/>
<dbReference type="STRING" id="321967.LSEI_1585"/>
<dbReference type="PaxDb" id="321967-LSEI_1585"/>
<dbReference type="GeneID" id="57090239"/>
<dbReference type="KEGG" id="lca:LSEI_1585"/>
<dbReference type="PATRIC" id="fig|321967.11.peg.1565"/>
<dbReference type="HOGENOM" id="CLU_047155_0_2_9"/>
<dbReference type="Proteomes" id="UP000001651">
    <property type="component" value="Chromosome"/>
</dbReference>
<dbReference type="GO" id="GO:0005737">
    <property type="term" value="C:cytoplasm"/>
    <property type="evidence" value="ECO:0007669"/>
    <property type="project" value="UniProtKB-SubCell"/>
</dbReference>
<dbReference type="GO" id="GO:0003746">
    <property type="term" value="F:translation elongation factor activity"/>
    <property type="evidence" value="ECO:0007669"/>
    <property type="project" value="UniProtKB-UniRule"/>
</dbReference>
<dbReference type="CDD" id="cd14275">
    <property type="entry name" value="UBA_EF-Ts"/>
    <property type="match status" value="1"/>
</dbReference>
<dbReference type="FunFam" id="1.10.8.10:FF:000001">
    <property type="entry name" value="Elongation factor Ts"/>
    <property type="match status" value="1"/>
</dbReference>
<dbReference type="Gene3D" id="1.10.286.20">
    <property type="match status" value="1"/>
</dbReference>
<dbReference type="Gene3D" id="1.10.8.10">
    <property type="entry name" value="DNA helicase RuvA subunit, C-terminal domain"/>
    <property type="match status" value="1"/>
</dbReference>
<dbReference type="Gene3D" id="3.30.479.20">
    <property type="entry name" value="Elongation factor Ts, dimerisation domain"/>
    <property type="match status" value="2"/>
</dbReference>
<dbReference type="HAMAP" id="MF_00050">
    <property type="entry name" value="EF_Ts"/>
    <property type="match status" value="1"/>
</dbReference>
<dbReference type="InterPro" id="IPR036402">
    <property type="entry name" value="EF-Ts_dimer_sf"/>
</dbReference>
<dbReference type="InterPro" id="IPR001816">
    <property type="entry name" value="Transl_elong_EFTs/EF1B"/>
</dbReference>
<dbReference type="InterPro" id="IPR014039">
    <property type="entry name" value="Transl_elong_EFTs/EF1B_dimer"/>
</dbReference>
<dbReference type="InterPro" id="IPR018101">
    <property type="entry name" value="Transl_elong_Ts_CS"/>
</dbReference>
<dbReference type="InterPro" id="IPR009060">
    <property type="entry name" value="UBA-like_sf"/>
</dbReference>
<dbReference type="NCBIfam" id="TIGR00116">
    <property type="entry name" value="tsf"/>
    <property type="match status" value="1"/>
</dbReference>
<dbReference type="PANTHER" id="PTHR11741">
    <property type="entry name" value="ELONGATION FACTOR TS"/>
    <property type="match status" value="1"/>
</dbReference>
<dbReference type="PANTHER" id="PTHR11741:SF0">
    <property type="entry name" value="ELONGATION FACTOR TS, MITOCHONDRIAL"/>
    <property type="match status" value="1"/>
</dbReference>
<dbReference type="Pfam" id="PF00889">
    <property type="entry name" value="EF_TS"/>
    <property type="match status" value="1"/>
</dbReference>
<dbReference type="SUPFAM" id="SSF54713">
    <property type="entry name" value="Elongation factor Ts (EF-Ts), dimerisation domain"/>
    <property type="match status" value="2"/>
</dbReference>
<dbReference type="SUPFAM" id="SSF46934">
    <property type="entry name" value="UBA-like"/>
    <property type="match status" value="1"/>
</dbReference>
<dbReference type="PROSITE" id="PS01126">
    <property type="entry name" value="EF_TS_1"/>
    <property type="match status" value="1"/>
</dbReference>
<dbReference type="PROSITE" id="PS01127">
    <property type="entry name" value="EF_TS_2"/>
    <property type="match status" value="1"/>
</dbReference>
<organism>
    <name type="scientific">Lacticaseibacillus paracasei (strain ATCC 334 / BCRC 17002 / CCUG 31169 / CIP 107868 / KCTC 3260 / NRRL B-441)</name>
    <name type="common">Lactobacillus paracasei</name>
    <dbReference type="NCBI Taxonomy" id="321967"/>
    <lineage>
        <taxon>Bacteria</taxon>
        <taxon>Bacillati</taxon>
        <taxon>Bacillota</taxon>
        <taxon>Bacilli</taxon>
        <taxon>Lactobacillales</taxon>
        <taxon>Lactobacillaceae</taxon>
        <taxon>Lacticaseibacillus</taxon>
    </lineage>
</organism>
<protein>
    <recommendedName>
        <fullName evidence="1">Elongation factor Ts</fullName>
        <shortName evidence="1">EF-Ts</shortName>
    </recommendedName>
</protein>
<feature type="chain" id="PRO_1000006111" description="Elongation factor Ts">
    <location>
        <begin position="1"/>
        <end position="293"/>
    </location>
</feature>
<feature type="region of interest" description="Involved in Mg(2+) ion dislocation from EF-Tu" evidence="1">
    <location>
        <begin position="80"/>
        <end position="83"/>
    </location>
</feature>
<accession>Q038L3</accession>
<keyword id="KW-0963">Cytoplasm</keyword>
<keyword id="KW-0251">Elongation factor</keyword>
<keyword id="KW-0648">Protein biosynthesis</keyword>
<keyword id="KW-1185">Reference proteome</keyword>
<evidence type="ECO:0000255" key="1">
    <source>
        <dbReference type="HAMAP-Rule" id="MF_00050"/>
    </source>
</evidence>
<sequence length="293" mass="31701">MAQITAAQVKELRDRTQVGMMDAKKALVAADGDMDKAIDVLREKGLAKAAKKSGNIAAEGLAEIAVNGNTAAIIEVNSETDFVASNDQFKDYVNNVAAAIAANKPADLEAAKATKMSDGQTVDEGAIALTTVIGEKISLRRFQVVEKTDNEHFGKYLHNGGQIAALTVIEGADDDTAKDVAMHVAAINPEYLDRTKVPAEELKHQTDIFTEETKNEGKPEKIVPRIVEGRVNKWLGEISLVDQEFVKDPDQTVAKYVAAKGGKVKGFVRYEVGEGIEKKQENFADEVMDQIKG</sequence>
<name>EFTS_LACP3</name>